<organism>
    <name type="scientific">Clostridium perfringens (strain SM101 / Type A)</name>
    <dbReference type="NCBI Taxonomy" id="289380"/>
    <lineage>
        <taxon>Bacteria</taxon>
        <taxon>Bacillati</taxon>
        <taxon>Bacillota</taxon>
        <taxon>Clostridia</taxon>
        <taxon>Eubacteriales</taxon>
        <taxon>Clostridiaceae</taxon>
        <taxon>Clostridium</taxon>
    </lineage>
</organism>
<accession>Q0SQ86</accession>
<reference key="1">
    <citation type="journal article" date="2006" name="Genome Res.">
        <title>Skewed genomic variability in strains of the toxigenic bacterial pathogen, Clostridium perfringens.</title>
        <authorList>
            <person name="Myers G.S.A."/>
            <person name="Rasko D.A."/>
            <person name="Cheung J.K."/>
            <person name="Ravel J."/>
            <person name="Seshadri R."/>
            <person name="DeBoy R.T."/>
            <person name="Ren Q."/>
            <person name="Varga J."/>
            <person name="Awad M.M."/>
            <person name="Brinkac L.M."/>
            <person name="Daugherty S.C."/>
            <person name="Haft D.H."/>
            <person name="Dodson R.J."/>
            <person name="Madupu R."/>
            <person name="Nelson W.C."/>
            <person name="Rosovitz M.J."/>
            <person name="Sullivan S.A."/>
            <person name="Khouri H."/>
            <person name="Dimitrov G.I."/>
            <person name="Watkins K.L."/>
            <person name="Mulligan S."/>
            <person name="Benton J."/>
            <person name="Radune D."/>
            <person name="Fisher D.J."/>
            <person name="Atkins H.S."/>
            <person name="Hiscox T."/>
            <person name="Jost B.H."/>
            <person name="Billington S.J."/>
            <person name="Songer J.G."/>
            <person name="McClane B.A."/>
            <person name="Titball R.W."/>
            <person name="Rood J.I."/>
            <person name="Melville S.B."/>
            <person name="Paulsen I.T."/>
        </authorList>
    </citation>
    <scope>NUCLEOTIDE SEQUENCE [LARGE SCALE GENOMIC DNA]</scope>
    <source>
        <strain>SM101 / Type A</strain>
    </source>
</reference>
<name>SYK_CLOPS</name>
<evidence type="ECO:0000255" key="1">
    <source>
        <dbReference type="HAMAP-Rule" id="MF_00252"/>
    </source>
</evidence>
<protein>
    <recommendedName>
        <fullName evidence="1">Lysine--tRNA ligase</fullName>
        <ecNumber evidence="1">6.1.1.6</ecNumber>
    </recommendedName>
    <alternativeName>
        <fullName evidence="1">Lysyl-tRNA synthetase</fullName>
        <shortName evidence="1">LysRS</shortName>
    </alternativeName>
</protein>
<sequence>MSNEEINIHEAEEQLSEQEMLRRQKLVELQEAGKDPFDVYKVERTHSSADVKDNFEELEGKEVKVAGRLMSKRGQGKVVFADLADLPGKIQLFIKIDNVGEEALKEFKTFDLGDWVAATGEVFKTKMGEVSIKVTSFELICKSLKPLPEKWHGLKDPDLRYRQREVDIITNPEVKDTFIKRSQIVKAIREFLDNRGFLEVDTPILSPIAGGAAARPFITHHNALDIDMYLRIATELYLKRLIVAGFEKVYEMGKNFRNEGVSVRHNPEFTAIELYEAYADYNDMMEIMENMIAYVCEKVNGSTKVTYEGTEIDFTPPWRRITMVDAVKEFAGIDFNEIKSDEEAQAIAKEKNLEFPKPLDKVTKGEVLNMLFEEYGEDKLIQPTFLVDYPVEISPLTKKKRGNEMFTERFEGFVYGREVCNAYSELNDPIVQRERFEQQAREREYGDDEAYMLDEEFMSALETGMPPTGGLGIGIDRMIMFLTDSSSIRDVILFPTMKPQK</sequence>
<dbReference type="EC" id="6.1.1.6" evidence="1"/>
<dbReference type="EMBL" id="CP000312">
    <property type="protein sequence ID" value="ABG87071.1"/>
    <property type="molecule type" value="Genomic_DNA"/>
</dbReference>
<dbReference type="RefSeq" id="WP_011593174.1">
    <property type="nucleotide sequence ID" value="NC_008262.1"/>
</dbReference>
<dbReference type="SMR" id="Q0SQ86"/>
<dbReference type="KEGG" id="cpr:CPR_2467"/>
<dbReference type="Proteomes" id="UP000001824">
    <property type="component" value="Chromosome"/>
</dbReference>
<dbReference type="GO" id="GO:0005829">
    <property type="term" value="C:cytosol"/>
    <property type="evidence" value="ECO:0007669"/>
    <property type="project" value="TreeGrafter"/>
</dbReference>
<dbReference type="GO" id="GO:0005524">
    <property type="term" value="F:ATP binding"/>
    <property type="evidence" value="ECO:0007669"/>
    <property type="project" value="UniProtKB-UniRule"/>
</dbReference>
<dbReference type="GO" id="GO:0140096">
    <property type="term" value="F:catalytic activity, acting on a protein"/>
    <property type="evidence" value="ECO:0007669"/>
    <property type="project" value="UniProtKB-ARBA"/>
</dbReference>
<dbReference type="GO" id="GO:0004824">
    <property type="term" value="F:lysine-tRNA ligase activity"/>
    <property type="evidence" value="ECO:0007669"/>
    <property type="project" value="UniProtKB-UniRule"/>
</dbReference>
<dbReference type="GO" id="GO:0000287">
    <property type="term" value="F:magnesium ion binding"/>
    <property type="evidence" value="ECO:0007669"/>
    <property type="project" value="UniProtKB-UniRule"/>
</dbReference>
<dbReference type="GO" id="GO:0016740">
    <property type="term" value="F:transferase activity"/>
    <property type="evidence" value="ECO:0007669"/>
    <property type="project" value="UniProtKB-ARBA"/>
</dbReference>
<dbReference type="GO" id="GO:0000049">
    <property type="term" value="F:tRNA binding"/>
    <property type="evidence" value="ECO:0007669"/>
    <property type="project" value="TreeGrafter"/>
</dbReference>
<dbReference type="GO" id="GO:0006430">
    <property type="term" value="P:lysyl-tRNA aminoacylation"/>
    <property type="evidence" value="ECO:0007669"/>
    <property type="project" value="UniProtKB-UniRule"/>
</dbReference>
<dbReference type="CDD" id="cd00775">
    <property type="entry name" value="LysRS_core"/>
    <property type="match status" value="1"/>
</dbReference>
<dbReference type="CDD" id="cd04322">
    <property type="entry name" value="LysRS_N"/>
    <property type="match status" value="1"/>
</dbReference>
<dbReference type="FunFam" id="2.40.50.140:FF:000024">
    <property type="entry name" value="Lysine--tRNA ligase"/>
    <property type="match status" value="1"/>
</dbReference>
<dbReference type="FunFam" id="3.30.930.10:FF:000001">
    <property type="entry name" value="Lysine--tRNA ligase"/>
    <property type="match status" value="1"/>
</dbReference>
<dbReference type="Gene3D" id="3.30.930.10">
    <property type="entry name" value="Bira Bifunctional Protein, Domain 2"/>
    <property type="match status" value="1"/>
</dbReference>
<dbReference type="Gene3D" id="2.40.50.140">
    <property type="entry name" value="Nucleic acid-binding proteins"/>
    <property type="match status" value="1"/>
</dbReference>
<dbReference type="HAMAP" id="MF_00252">
    <property type="entry name" value="Lys_tRNA_synth_class2"/>
    <property type="match status" value="1"/>
</dbReference>
<dbReference type="InterPro" id="IPR004364">
    <property type="entry name" value="Aa-tRNA-synt_II"/>
</dbReference>
<dbReference type="InterPro" id="IPR006195">
    <property type="entry name" value="aa-tRNA-synth_II"/>
</dbReference>
<dbReference type="InterPro" id="IPR045864">
    <property type="entry name" value="aa-tRNA-synth_II/BPL/LPL"/>
</dbReference>
<dbReference type="InterPro" id="IPR002313">
    <property type="entry name" value="Lys-tRNA-ligase_II"/>
</dbReference>
<dbReference type="InterPro" id="IPR044136">
    <property type="entry name" value="Lys-tRNA-ligase_II_N"/>
</dbReference>
<dbReference type="InterPro" id="IPR018149">
    <property type="entry name" value="Lys-tRNA-synth_II_C"/>
</dbReference>
<dbReference type="InterPro" id="IPR012340">
    <property type="entry name" value="NA-bd_OB-fold"/>
</dbReference>
<dbReference type="InterPro" id="IPR004365">
    <property type="entry name" value="NA-bd_OB_tRNA"/>
</dbReference>
<dbReference type="NCBIfam" id="TIGR00499">
    <property type="entry name" value="lysS_bact"/>
    <property type="match status" value="1"/>
</dbReference>
<dbReference type="NCBIfam" id="NF001756">
    <property type="entry name" value="PRK00484.1"/>
    <property type="match status" value="1"/>
</dbReference>
<dbReference type="PANTHER" id="PTHR42918:SF15">
    <property type="entry name" value="LYSINE--TRNA LIGASE, CHLOROPLASTIC_MITOCHONDRIAL"/>
    <property type="match status" value="1"/>
</dbReference>
<dbReference type="PANTHER" id="PTHR42918">
    <property type="entry name" value="LYSYL-TRNA SYNTHETASE"/>
    <property type="match status" value="1"/>
</dbReference>
<dbReference type="Pfam" id="PF00152">
    <property type="entry name" value="tRNA-synt_2"/>
    <property type="match status" value="1"/>
</dbReference>
<dbReference type="Pfam" id="PF01336">
    <property type="entry name" value="tRNA_anti-codon"/>
    <property type="match status" value="1"/>
</dbReference>
<dbReference type="PRINTS" id="PR00982">
    <property type="entry name" value="TRNASYNTHLYS"/>
</dbReference>
<dbReference type="SUPFAM" id="SSF55681">
    <property type="entry name" value="Class II aaRS and biotin synthetases"/>
    <property type="match status" value="1"/>
</dbReference>
<dbReference type="SUPFAM" id="SSF50249">
    <property type="entry name" value="Nucleic acid-binding proteins"/>
    <property type="match status" value="1"/>
</dbReference>
<dbReference type="PROSITE" id="PS50862">
    <property type="entry name" value="AA_TRNA_LIGASE_II"/>
    <property type="match status" value="1"/>
</dbReference>
<gene>
    <name evidence="1" type="primary">lysS</name>
    <name type="ordered locus">CPR_2467</name>
</gene>
<proteinExistence type="inferred from homology"/>
<comment type="catalytic activity">
    <reaction evidence="1">
        <text>tRNA(Lys) + L-lysine + ATP = L-lysyl-tRNA(Lys) + AMP + diphosphate</text>
        <dbReference type="Rhea" id="RHEA:20792"/>
        <dbReference type="Rhea" id="RHEA-COMP:9696"/>
        <dbReference type="Rhea" id="RHEA-COMP:9697"/>
        <dbReference type="ChEBI" id="CHEBI:30616"/>
        <dbReference type="ChEBI" id="CHEBI:32551"/>
        <dbReference type="ChEBI" id="CHEBI:33019"/>
        <dbReference type="ChEBI" id="CHEBI:78442"/>
        <dbReference type="ChEBI" id="CHEBI:78529"/>
        <dbReference type="ChEBI" id="CHEBI:456215"/>
        <dbReference type="EC" id="6.1.1.6"/>
    </reaction>
</comment>
<comment type="cofactor">
    <cofactor evidence="1">
        <name>Mg(2+)</name>
        <dbReference type="ChEBI" id="CHEBI:18420"/>
    </cofactor>
    <text evidence="1">Binds 3 Mg(2+) ions per subunit.</text>
</comment>
<comment type="subunit">
    <text evidence="1">Homodimer.</text>
</comment>
<comment type="subcellular location">
    <subcellularLocation>
        <location evidence="1">Cytoplasm</location>
    </subcellularLocation>
</comment>
<comment type="similarity">
    <text evidence="1">Belongs to the class-II aminoacyl-tRNA synthetase family.</text>
</comment>
<feature type="chain" id="PRO_1000012872" description="Lysine--tRNA ligase">
    <location>
        <begin position="1"/>
        <end position="501"/>
    </location>
</feature>
<feature type="binding site" evidence="1">
    <location>
        <position position="411"/>
    </location>
    <ligand>
        <name>Mg(2+)</name>
        <dbReference type="ChEBI" id="CHEBI:18420"/>
        <label>1</label>
    </ligand>
</feature>
<feature type="binding site" evidence="1">
    <location>
        <position position="418"/>
    </location>
    <ligand>
        <name>Mg(2+)</name>
        <dbReference type="ChEBI" id="CHEBI:18420"/>
        <label>1</label>
    </ligand>
</feature>
<feature type="binding site" evidence="1">
    <location>
        <position position="418"/>
    </location>
    <ligand>
        <name>Mg(2+)</name>
        <dbReference type="ChEBI" id="CHEBI:18420"/>
        <label>2</label>
    </ligand>
</feature>
<keyword id="KW-0030">Aminoacyl-tRNA synthetase</keyword>
<keyword id="KW-0067">ATP-binding</keyword>
<keyword id="KW-0963">Cytoplasm</keyword>
<keyword id="KW-0436">Ligase</keyword>
<keyword id="KW-0460">Magnesium</keyword>
<keyword id="KW-0479">Metal-binding</keyword>
<keyword id="KW-0547">Nucleotide-binding</keyword>
<keyword id="KW-0648">Protein biosynthesis</keyword>